<proteinExistence type="evidence at protein level"/>
<feature type="chain" id="PRO_0000089890" description="Protein FAM161B">
    <location>
        <begin position="1"/>
        <end position="647"/>
    </location>
</feature>
<feature type="region of interest" description="Disordered" evidence="2">
    <location>
        <begin position="1"/>
        <end position="39"/>
    </location>
</feature>
<feature type="region of interest" description="Disordered" evidence="2">
    <location>
        <begin position="89"/>
        <end position="110"/>
    </location>
</feature>
<feature type="region of interest" description="Disordered" evidence="2">
    <location>
        <begin position="135"/>
        <end position="167"/>
    </location>
</feature>
<feature type="region of interest" description="Disordered" evidence="2">
    <location>
        <begin position="332"/>
        <end position="352"/>
    </location>
</feature>
<feature type="region of interest" description="Disordered" evidence="2">
    <location>
        <begin position="388"/>
        <end position="439"/>
    </location>
</feature>
<feature type="region of interest" description="Disordered" evidence="2">
    <location>
        <begin position="583"/>
        <end position="647"/>
    </location>
</feature>
<feature type="coiled-coil region" evidence="1">
    <location>
        <begin position="262"/>
        <end position="292"/>
    </location>
</feature>
<feature type="coiled-coil region" evidence="1">
    <location>
        <begin position="510"/>
        <end position="546"/>
    </location>
</feature>
<feature type="compositionally biased region" description="Acidic residues" evidence="2">
    <location>
        <begin position="91"/>
        <end position="105"/>
    </location>
</feature>
<feature type="compositionally biased region" description="Polar residues" evidence="2">
    <location>
        <begin position="332"/>
        <end position="350"/>
    </location>
</feature>
<feature type="compositionally biased region" description="Basic and acidic residues" evidence="2">
    <location>
        <begin position="590"/>
        <end position="602"/>
    </location>
</feature>
<feature type="compositionally biased region" description="Polar residues" evidence="2">
    <location>
        <begin position="637"/>
        <end position="647"/>
    </location>
</feature>
<feature type="splice variant" id="VSP_046328" description="In isoform 2." evidence="5">
    <original>M</original>
    <variation>MRGENRPIGKRTLPPRAGWIGGCPGSQPDAKARKGWTLAPHSSRCHRCCHYRCHCRCCLCPAEM</variation>
    <location>
        <position position="1"/>
    </location>
</feature>
<feature type="sequence variant" id="VAR_027963" description="In dbSNP:rs11848954.">
    <original>G</original>
    <variation>A</variation>
    <location>
        <position position="11"/>
    </location>
</feature>
<feature type="sequence variant" id="VAR_069168" description="In dbSNP:rs28927675." evidence="3">
    <original>K</original>
    <variation>R</variation>
    <location>
        <position position="487"/>
    </location>
</feature>
<feature type="sequence variant" id="VAR_027964" description="In dbSNP:rs17094077.">
    <original>L</original>
    <variation>P</variation>
    <location>
        <position position="622"/>
    </location>
</feature>
<feature type="sequence conflict" description="In Ref. 1; BAB71131." evidence="6" ref="1">
    <original>I</original>
    <variation>M</variation>
    <location>
        <position position="57"/>
    </location>
</feature>
<feature type="sequence conflict" description="In Ref. 1; BAH13868." evidence="6" ref="1">
    <original>N</original>
    <variation>S</variation>
    <location>
        <position position="96"/>
    </location>
</feature>
<reference key="1">
    <citation type="journal article" date="2004" name="Nat. Genet.">
        <title>Complete sequencing and characterization of 21,243 full-length human cDNAs.</title>
        <authorList>
            <person name="Ota T."/>
            <person name="Suzuki Y."/>
            <person name="Nishikawa T."/>
            <person name="Otsuki T."/>
            <person name="Sugiyama T."/>
            <person name="Irie R."/>
            <person name="Wakamatsu A."/>
            <person name="Hayashi K."/>
            <person name="Sato H."/>
            <person name="Nagai K."/>
            <person name="Kimura K."/>
            <person name="Makita H."/>
            <person name="Sekine M."/>
            <person name="Obayashi M."/>
            <person name="Nishi T."/>
            <person name="Shibahara T."/>
            <person name="Tanaka T."/>
            <person name="Ishii S."/>
            <person name="Yamamoto J."/>
            <person name="Saito K."/>
            <person name="Kawai Y."/>
            <person name="Isono Y."/>
            <person name="Nakamura Y."/>
            <person name="Nagahari K."/>
            <person name="Murakami K."/>
            <person name="Yasuda T."/>
            <person name="Iwayanagi T."/>
            <person name="Wagatsuma M."/>
            <person name="Shiratori A."/>
            <person name="Sudo H."/>
            <person name="Hosoiri T."/>
            <person name="Kaku Y."/>
            <person name="Kodaira H."/>
            <person name="Kondo H."/>
            <person name="Sugawara M."/>
            <person name="Takahashi M."/>
            <person name="Kanda K."/>
            <person name="Yokoi T."/>
            <person name="Furuya T."/>
            <person name="Kikkawa E."/>
            <person name="Omura Y."/>
            <person name="Abe K."/>
            <person name="Kamihara K."/>
            <person name="Katsuta N."/>
            <person name="Sato K."/>
            <person name="Tanikawa M."/>
            <person name="Yamazaki M."/>
            <person name="Ninomiya K."/>
            <person name="Ishibashi T."/>
            <person name="Yamashita H."/>
            <person name="Murakawa K."/>
            <person name="Fujimori K."/>
            <person name="Tanai H."/>
            <person name="Kimata M."/>
            <person name="Watanabe M."/>
            <person name="Hiraoka S."/>
            <person name="Chiba Y."/>
            <person name="Ishida S."/>
            <person name="Ono Y."/>
            <person name="Takiguchi S."/>
            <person name="Watanabe S."/>
            <person name="Yosida M."/>
            <person name="Hotuta T."/>
            <person name="Kusano J."/>
            <person name="Kanehori K."/>
            <person name="Takahashi-Fujii A."/>
            <person name="Hara H."/>
            <person name="Tanase T.-O."/>
            <person name="Nomura Y."/>
            <person name="Togiya S."/>
            <person name="Komai F."/>
            <person name="Hara R."/>
            <person name="Takeuchi K."/>
            <person name="Arita M."/>
            <person name="Imose N."/>
            <person name="Musashino K."/>
            <person name="Yuuki H."/>
            <person name="Oshima A."/>
            <person name="Sasaki N."/>
            <person name="Aotsuka S."/>
            <person name="Yoshikawa Y."/>
            <person name="Matsunawa H."/>
            <person name="Ichihara T."/>
            <person name="Shiohata N."/>
            <person name="Sano S."/>
            <person name="Moriya S."/>
            <person name="Momiyama H."/>
            <person name="Satoh N."/>
            <person name="Takami S."/>
            <person name="Terashima Y."/>
            <person name="Suzuki O."/>
            <person name="Nakagawa S."/>
            <person name="Senoh A."/>
            <person name="Mizoguchi H."/>
            <person name="Goto Y."/>
            <person name="Shimizu F."/>
            <person name="Wakebe H."/>
            <person name="Hishigaki H."/>
            <person name="Watanabe T."/>
            <person name="Sugiyama A."/>
            <person name="Takemoto M."/>
            <person name="Kawakami B."/>
            <person name="Yamazaki M."/>
            <person name="Watanabe K."/>
            <person name="Kumagai A."/>
            <person name="Itakura S."/>
            <person name="Fukuzumi Y."/>
            <person name="Fujimori Y."/>
            <person name="Komiyama M."/>
            <person name="Tashiro H."/>
            <person name="Tanigami A."/>
            <person name="Fujiwara T."/>
            <person name="Ono T."/>
            <person name="Yamada K."/>
            <person name="Fujii Y."/>
            <person name="Ozaki K."/>
            <person name="Hirao M."/>
            <person name="Ohmori Y."/>
            <person name="Kawabata A."/>
            <person name="Hikiji T."/>
            <person name="Kobatake N."/>
            <person name="Inagaki H."/>
            <person name="Ikema Y."/>
            <person name="Okamoto S."/>
            <person name="Okitani R."/>
            <person name="Kawakami T."/>
            <person name="Noguchi S."/>
            <person name="Itoh T."/>
            <person name="Shigeta K."/>
            <person name="Senba T."/>
            <person name="Matsumura K."/>
            <person name="Nakajima Y."/>
            <person name="Mizuno T."/>
            <person name="Morinaga M."/>
            <person name="Sasaki M."/>
            <person name="Togashi T."/>
            <person name="Oyama M."/>
            <person name="Hata H."/>
            <person name="Watanabe M."/>
            <person name="Komatsu T."/>
            <person name="Mizushima-Sugano J."/>
            <person name="Satoh T."/>
            <person name="Shirai Y."/>
            <person name="Takahashi Y."/>
            <person name="Nakagawa K."/>
            <person name="Okumura K."/>
            <person name="Nagase T."/>
            <person name="Nomura N."/>
            <person name="Kikuchi H."/>
            <person name="Masuho Y."/>
            <person name="Yamashita R."/>
            <person name="Nakai K."/>
            <person name="Yada T."/>
            <person name="Nakamura Y."/>
            <person name="Ohara O."/>
            <person name="Isogai T."/>
            <person name="Sugano S."/>
        </authorList>
    </citation>
    <scope>NUCLEOTIDE SEQUENCE [LARGE SCALE MRNA] (ISOFORMS 1 AND 2)</scope>
    <scope>VARIANT ARG-487</scope>
    <source>
        <tissue>Neuron</tissue>
        <tissue>Testis</tissue>
    </source>
</reference>
<reference key="2">
    <citation type="journal article" date="2003" name="Nature">
        <title>The DNA sequence and analysis of human chromosome 14.</title>
        <authorList>
            <person name="Heilig R."/>
            <person name="Eckenberg R."/>
            <person name="Petit J.-L."/>
            <person name="Fonknechten N."/>
            <person name="Da Silva C."/>
            <person name="Cattolico L."/>
            <person name="Levy M."/>
            <person name="Barbe V."/>
            <person name="De Berardinis V."/>
            <person name="Ureta-Vidal A."/>
            <person name="Pelletier E."/>
            <person name="Vico V."/>
            <person name="Anthouard V."/>
            <person name="Rowen L."/>
            <person name="Madan A."/>
            <person name="Qin S."/>
            <person name="Sun H."/>
            <person name="Du H."/>
            <person name="Pepin K."/>
            <person name="Artiguenave F."/>
            <person name="Robert C."/>
            <person name="Cruaud C."/>
            <person name="Bruels T."/>
            <person name="Jaillon O."/>
            <person name="Friedlander L."/>
            <person name="Samson G."/>
            <person name="Brottier P."/>
            <person name="Cure S."/>
            <person name="Segurens B."/>
            <person name="Aniere F."/>
            <person name="Samain S."/>
            <person name="Crespeau H."/>
            <person name="Abbasi N."/>
            <person name="Aiach N."/>
            <person name="Boscus D."/>
            <person name="Dickhoff R."/>
            <person name="Dors M."/>
            <person name="Dubois I."/>
            <person name="Friedman C."/>
            <person name="Gouyvenoux M."/>
            <person name="James R."/>
            <person name="Madan A."/>
            <person name="Mairey-Estrada B."/>
            <person name="Mangenot S."/>
            <person name="Martins N."/>
            <person name="Menard M."/>
            <person name="Oztas S."/>
            <person name="Ratcliffe A."/>
            <person name="Shaffer T."/>
            <person name="Trask B."/>
            <person name="Vacherie B."/>
            <person name="Bellemere C."/>
            <person name="Belser C."/>
            <person name="Besnard-Gonnet M."/>
            <person name="Bartol-Mavel D."/>
            <person name="Boutard M."/>
            <person name="Briez-Silla S."/>
            <person name="Combette S."/>
            <person name="Dufosse-Laurent V."/>
            <person name="Ferron C."/>
            <person name="Lechaplais C."/>
            <person name="Louesse C."/>
            <person name="Muselet D."/>
            <person name="Magdelenat G."/>
            <person name="Pateau E."/>
            <person name="Petit E."/>
            <person name="Sirvain-Trukniewicz P."/>
            <person name="Trybou A."/>
            <person name="Vega-Czarny N."/>
            <person name="Bataille E."/>
            <person name="Bluet E."/>
            <person name="Bordelais I."/>
            <person name="Dubois M."/>
            <person name="Dumont C."/>
            <person name="Guerin T."/>
            <person name="Haffray S."/>
            <person name="Hammadi R."/>
            <person name="Muanga J."/>
            <person name="Pellouin V."/>
            <person name="Robert D."/>
            <person name="Wunderle E."/>
            <person name="Gauguet G."/>
            <person name="Roy A."/>
            <person name="Sainte-Marthe L."/>
            <person name="Verdier J."/>
            <person name="Verdier-Discala C."/>
            <person name="Hillier L.W."/>
            <person name="Fulton L."/>
            <person name="McPherson J."/>
            <person name="Matsuda F."/>
            <person name="Wilson R."/>
            <person name="Scarpelli C."/>
            <person name="Gyapay G."/>
            <person name="Wincker P."/>
            <person name="Saurin W."/>
            <person name="Quetier F."/>
            <person name="Waterston R."/>
            <person name="Hood L."/>
            <person name="Weissenbach J."/>
        </authorList>
    </citation>
    <scope>NUCLEOTIDE SEQUENCE [LARGE SCALE GENOMIC DNA]</scope>
</reference>
<reference key="3">
    <citation type="journal article" date="2004" name="Genome Res.">
        <title>The status, quality, and expansion of the NIH full-length cDNA project: the Mammalian Gene Collection (MGC).</title>
        <authorList>
            <consortium name="The MGC Project Team"/>
        </authorList>
    </citation>
    <scope>NUCLEOTIDE SEQUENCE [LARGE SCALE MRNA] (ISOFORM 1)</scope>
    <source>
        <tissue>Uterus</tissue>
    </source>
</reference>
<reference key="4">
    <citation type="journal article" date="2012" name="Hum. Mol. Genet.">
        <title>The retinitis pigmentosa 28 protein FAM161A is a novel ciliary protein involved in intermolecular protein interaction and microtubule association.</title>
        <authorList>
            <person name="Zach F."/>
            <person name="Grassmann F."/>
            <person name="Langmann T."/>
            <person name="Sorusch N."/>
            <person name="Wolfrum U."/>
            <person name="Stohr H."/>
        </authorList>
    </citation>
    <scope>TISSUE SPECIFICITY</scope>
    <scope>INTERACTION WITH FAM161A</scope>
</reference>
<dbReference type="EMBL" id="AK056259">
    <property type="protein sequence ID" value="BAB71131.1"/>
    <property type="molecule type" value="mRNA"/>
</dbReference>
<dbReference type="EMBL" id="AK302982">
    <property type="protein sequence ID" value="BAH13868.1"/>
    <property type="molecule type" value="mRNA"/>
</dbReference>
<dbReference type="EMBL" id="AC005480">
    <property type="status" value="NOT_ANNOTATED_CDS"/>
    <property type="molecule type" value="Genomic_DNA"/>
</dbReference>
<dbReference type="EMBL" id="BC053909">
    <property type="protein sequence ID" value="AAH53909.1"/>
    <property type="molecule type" value="mRNA"/>
</dbReference>
<dbReference type="CCDS" id="CCDS9822.3">
    <molecule id="Q96MY7-1"/>
</dbReference>
<dbReference type="RefSeq" id="NP_689658.3">
    <molecule id="Q96MY7-1"/>
    <property type="nucleotide sequence ID" value="NM_152445.3"/>
</dbReference>
<dbReference type="SMR" id="Q96MY7"/>
<dbReference type="BioGRID" id="126916">
    <property type="interactions" value="89"/>
</dbReference>
<dbReference type="FunCoup" id="Q96MY7">
    <property type="interactions" value="116"/>
</dbReference>
<dbReference type="IntAct" id="Q96MY7">
    <property type="interactions" value="74"/>
</dbReference>
<dbReference type="MINT" id="Q96MY7"/>
<dbReference type="STRING" id="9606.ENSP00000499021"/>
<dbReference type="GlyGen" id="Q96MY7">
    <property type="glycosylation" value="1 site, 1 O-linked glycan (1 site)"/>
</dbReference>
<dbReference type="iPTMnet" id="Q96MY7"/>
<dbReference type="PhosphoSitePlus" id="Q96MY7"/>
<dbReference type="BioMuta" id="FAM161B"/>
<dbReference type="DMDM" id="116241303"/>
<dbReference type="jPOST" id="Q96MY7"/>
<dbReference type="MassIVE" id="Q96MY7"/>
<dbReference type="PaxDb" id="9606-ENSP00000286544"/>
<dbReference type="PeptideAtlas" id="Q96MY7"/>
<dbReference type="ProteomicsDB" id="77432">
    <molecule id="Q96MY7-1"/>
</dbReference>
<dbReference type="Antibodypedia" id="12752">
    <property type="antibodies" value="42 antibodies from 13 providers"/>
</dbReference>
<dbReference type="DNASU" id="145483"/>
<dbReference type="Ensembl" id="ENST00000286544.5">
    <molecule id="Q96MY7-1"/>
    <property type="protein sequence ID" value="ENSP00000286544.4"/>
    <property type="gene ID" value="ENSG00000156050.10"/>
</dbReference>
<dbReference type="Ensembl" id="ENST00000651776.1">
    <molecule id="Q96MY7-2"/>
    <property type="protein sequence ID" value="ENSP00000499021.1"/>
    <property type="gene ID" value="ENSG00000156050.10"/>
</dbReference>
<dbReference type="GeneID" id="145483"/>
<dbReference type="KEGG" id="hsa:145483"/>
<dbReference type="MANE-Select" id="ENST00000286544.5">
    <property type="protein sequence ID" value="ENSP00000286544.4"/>
    <property type="RefSeq nucleotide sequence ID" value="NM_152445.3"/>
    <property type="RefSeq protein sequence ID" value="NP_689658.3"/>
</dbReference>
<dbReference type="UCSC" id="uc001xpd.4">
    <molecule id="Q96MY7-1"/>
    <property type="organism name" value="human"/>
</dbReference>
<dbReference type="AGR" id="HGNC:19854"/>
<dbReference type="CTD" id="145483"/>
<dbReference type="DisGeNET" id="145483"/>
<dbReference type="GeneCards" id="FAM161B"/>
<dbReference type="HGNC" id="HGNC:19854">
    <property type="gene designation" value="FAM161B"/>
</dbReference>
<dbReference type="HPA" id="ENSG00000156050">
    <property type="expression patterns" value="Low tissue specificity"/>
</dbReference>
<dbReference type="neXtProt" id="NX_Q96MY7"/>
<dbReference type="OpenTargets" id="ENSG00000156050"/>
<dbReference type="PharmGKB" id="PA162386893"/>
<dbReference type="VEuPathDB" id="HostDB:ENSG00000156050"/>
<dbReference type="eggNOG" id="ENOG502R2CY">
    <property type="taxonomic scope" value="Eukaryota"/>
</dbReference>
<dbReference type="GeneTree" id="ENSGT00940000159998"/>
<dbReference type="HOGENOM" id="CLU_010955_1_0_1"/>
<dbReference type="InParanoid" id="Q96MY7"/>
<dbReference type="OMA" id="KCQAMHK"/>
<dbReference type="OrthoDB" id="2150121at2759"/>
<dbReference type="PAN-GO" id="Q96MY7">
    <property type="GO annotations" value="2 GO annotations based on evolutionary models"/>
</dbReference>
<dbReference type="PhylomeDB" id="Q96MY7"/>
<dbReference type="TreeFam" id="TF321199"/>
<dbReference type="PathwayCommons" id="Q96MY7"/>
<dbReference type="SignaLink" id="Q96MY7"/>
<dbReference type="BioGRID-ORCS" id="145483">
    <property type="hits" value="18 hits in 1147 CRISPR screens"/>
</dbReference>
<dbReference type="ChiTaRS" id="FAM161B">
    <property type="organism name" value="human"/>
</dbReference>
<dbReference type="GenomeRNAi" id="145483"/>
<dbReference type="Pharos" id="Q96MY7">
    <property type="development level" value="Tdark"/>
</dbReference>
<dbReference type="PRO" id="PR:Q96MY7"/>
<dbReference type="Proteomes" id="UP000005640">
    <property type="component" value="Chromosome 14"/>
</dbReference>
<dbReference type="RNAct" id="Q96MY7">
    <property type="molecule type" value="protein"/>
</dbReference>
<dbReference type="Bgee" id="ENSG00000156050">
    <property type="expression patterns" value="Expressed in pancreatic ductal cell and 199 other cell types or tissues"/>
</dbReference>
<dbReference type="ExpressionAtlas" id="Q96MY7">
    <property type="expression patterns" value="baseline and differential"/>
</dbReference>
<dbReference type="GO" id="GO:0005881">
    <property type="term" value="C:cytoplasmic microtubule"/>
    <property type="evidence" value="ECO:0000314"/>
    <property type="project" value="UniProtKB"/>
</dbReference>
<dbReference type="GO" id="GO:0015630">
    <property type="term" value="C:microtubule cytoskeleton"/>
    <property type="evidence" value="ECO:0000314"/>
    <property type="project" value="UniProtKB"/>
</dbReference>
<dbReference type="GO" id="GO:0044782">
    <property type="term" value="P:cilium organization"/>
    <property type="evidence" value="ECO:0000318"/>
    <property type="project" value="GO_Central"/>
</dbReference>
<dbReference type="InterPro" id="IPR051655">
    <property type="entry name" value="FAM161"/>
</dbReference>
<dbReference type="InterPro" id="IPR019579">
    <property type="entry name" value="FAM161A/B"/>
</dbReference>
<dbReference type="PANTHER" id="PTHR21501">
    <property type="entry name" value="PROTEIN FAM-161"/>
    <property type="match status" value="1"/>
</dbReference>
<dbReference type="PANTHER" id="PTHR21501:SF4">
    <property type="entry name" value="PROTEIN FAM161B"/>
    <property type="match status" value="1"/>
</dbReference>
<dbReference type="Pfam" id="PF10595">
    <property type="entry name" value="FAM161A_B"/>
    <property type="match status" value="1"/>
</dbReference>
<organism>
    <name type="scientific">Homo sapiens</name>
    <name type="common">Human</name>
    <dbReference type="NCBI Taxonomy" id="9606"/>
    <lineage>
        <taxon>Eukaryota</taxon>
        <taxon>Metazoa</taxon>
        <taxon>Chordata</taxon>
        <taxon>Craniata</taxon>
        <taxon>Vertebrata</taxon>
        <taxon>Euteleostomi</taxon>
        <taxon>Mammalia</taxon>
        <taxon>Eutheria</taxon>
        <taxon>Euarchontoglires</taxon>
        <taxon>Primates</taxon>
        <taxon>Haplorrhini</taxon>
        <taxon>Catarrhini</taxon>
        <taxon>Hominidae</taxon>
        <taxon>Homo</taxon>
    </lineage>
</organism>
<keyword id="KW-0025">Alternative splicing</keyword>
<keyword id="KW-0175">Coiled coil</keyword>
<keyword id="KW-1267">Proteomics identification</keyword>
<keyword id="KW-1185">Reference proteome</keyword>
<protein>
    <recommendedName>
        <fullName>Protein FAM161B</fullName>
    </recommendedName>
</protein>
<sequence>MTVGRPEGAPGGAEGSRQIFPPESFADTEAGEELSGDGLVLPRASKLDEFLSPEEEIDSTSDSTGSIYQNLQELKQKGRWCLLESLFQSDPESDENLSEDEEDLESFFQDKDRGMVQVQCPQALRCGSTRRCSSLNNLPSNIPRPQTQPPSGSRPPSQHRSVSSWASSITVPRPFRMTLREARKKAEWLGSPASFEQERQRAQRQGEEEAECHRQFRAQPVPAHVYLPLYQEIMERSEARRQAGIQKRKELLLSSLKPFSFLEKEEQLKEAARQRDLAATAEAKISKQKATRRIPKSILEPALGDKLQEAELFRKIRIQMRALDMLQMASSPIASSSNRANPQPRTATRTQQEKLGFLHTNFRFQPRVNPVVPDYEGLYKAFQRRAAKRRETQEATRNKPFLLRTANLRHPQRPCDAATTGRRQDSPQPPATPLPRSRSLSGLASLSANTLPVHITDATRKRESAVRSALEKKNKADESIQWLEIHKKKSQAMSKSVTLRAKAMDPHKSLEEVFKAKLKENRNNDRKRAKEYKKELEEMKQRIQTRPYLFEQVAKDLAKKEAEQWYLDTLKQAGLEEDFVRNKGQGTRAVQEKETKIKDFPRFQETTKLSIRDPEQGLEGSLEQPASPRKVLEELSHQSPENLVSLA</sequence>
<evidence type="ECO:0000255" key="1"/>
<evidence type="ECO:0000256" key="2">
    <source>
        <dbReference type="SAM" id="MobiDB-lite"/>
    </source>
</evidence>
<evidence type="ECO:0000269" key="3">
    <source>
    </source>
</evidence>
<evidence type="ECO:0000269" key="4">
    <source>
    </source>
</evidence>
<evidence type="ECO:0000303" key="5">
    <source>
    </source>
</evidence>
<evidence type="ECO:0000305" key="6"/>
<comment type="subunit">
    <text evidence="4">Interacts with FAM161A.</text>
</comment>
<comment type="interaction">
    <interactant intactId="EBI-7225287">
        <id>Q96MY7</id>
    </interactant>
    <interactant intactId="EBI-11096309">
        <id>Q9NYB9-2</id>
        <label>ABI2</label>
    </interactant>
    <organismsDiffer>false</organismsDiffer>
    <experiments>3</experiments>
</comment>
<comment type="interaction">
    <interactant intactId="EBI-7225287">
        <id>Q96MY7</id>
    </interactant>
    <interactant intactId="EBI-5661893">
        <id>Q86SG2</id>
        <label>ANKRD23</label>
    </interactant>
    <organismsDiffer>false</organismsDiffer>
    <experiments>3</experiments>
</comment>
<comment type="interaction">
    <interactant intactId="EBI-7225287">
        <id>Q96MY7</id>
    </interactant>
    <interactant intactId="EBI-11975051">
        <id>Q8TD16-2</id>
        <label>BICD2</label>
    </interactant>
    <organismsDiffer>false</organismsDiffer>
    <experiments>3</experiments>
</comment>
<comment type="interaction">
    <interactant intactId="EBI-7225287">
        <id>Q96MY7</id>
    </interactant>
    <interactant intactId="EBI-465872">
        <id>Q6QNY1</id>
        <label>BLOC1S2</label>
    </interactant>
    <organismsDiffer>false</organismsDiffer>
    <experiments>3</experiments>
</comment>
<comment type="interaction">
    <interactant intactId="EBI-7225287">
        <id>Q96MY7</id>
    </interactant>
    <interactant intactId="EBI-10193358">
        <id>Q96GS4</id>
        <label>BORCS6</label>
    </interactant>
    <organismsDiffer>false</organismsDiffer>
    <experiments>3</experiments>
</comment>
<comment type="interaction">
    <interactant intactId="EBI-7225287">
        <id>Q96MY7</id>
    </interactant>
    <interactant intactId="EBI-11530605">
        <id>Q9H257-2</id>
        <label>CARD9</label>
    </interactant>
    <organismsDiffer>false</organismsDiffer>
    <experiments>3</experiments>
</comment>
<comment type="interaction">
    <interactant intactId="EBI-7225287">
        <id>Q96MY7</id>
    </interactant>
    <interactant intactId="EBI-947308">
        <id>Q9Y3M2</id>
        <label>CBY1</label>
    </interactant>
    <organismsDiffer>false</organismsDiffer>
    <experiments>3</experiments>
</comment>
<comment type="interaction">
    <interactant intactId="EBI-7225287">
        <id>Q96MY7</id>
    </interactant>
    <interactant intactId="EBI-11977221">
        <id>Q86Z20</id>
        <label>CCDC125</label>
    </interactant>
    <organismsDiffer>false</organismsDiffer>
    <experiments>3</experiments>
</comment>
<comment type="interaction">
    <interactant intactId="EBI-7225287">
        <id>Q96MY7</id>
    </interactant>
    <interactant intactId="EBI-10961312">
        <id>Q8IYE1</id>
        <label>CCDC13</label>
    </interactant>
    <organismsDiffer>false</organismsDiffer>
    <experiments>3</experiments>
</comment>
<comment type="interaction">
    <interactant intactId="EBI-7225287">
        <id>Q96MY7</id>
    </interactant>
    <interactant intactId="EBI-10972887">
        <id>Q96M89-2</id>
        <label>CCDC138</label>
    </interactant>
    <organismsDiffer>false</organismsDiffer>
    <experiments>3</experiments>
</comment>
<comment type="interaction">
    <interactant intactId="EBI-7225287">
        <id>Q96MY7</id>
    </interactant>
    <interactant intactId="EBI-2548868">
        <id>P0C7W6</id>
        <label>CCDC172</label>
    </interactant>
    <organismsDiffer>false</organismsDiffer>
    <experiments>3</experiments>
</comment>
<comment type="interaction">
    <interactant intactId="EBI-7225287">
        <id>Q96MY7</id>
    </interactant>
    <interactant intactId="EBI-10961624">
        <id>Q2TAC2-2</id>
        <label>CCDC57</label>
    </interactant>
    <organismsDiffer>false</organismsDiffer>
    <experiments>6</experiments>
</comment>
<comment type="interaction">
    <interactant intactId="EBI-7225287">
        <id>Q96MY7</id>
    </interactant>
    <interactant intactId="EBI-19036308">
        <id>Q8IWF9</id>
        <label>CCDC83</label>
    </interactant>
    <organismsDiffer>false</organismsDiffer>
    <experiments>3</experiments>
</comment>
<comment type="interaction">
    <interactant intactId="EBI-7225287">
        <id>Q96MY7</id>
    </interactant>
    <interactant intactId="EBI-347573">
        <id>A6NC98</id>
        <label>CCDC88B</label>
    </interactant>
    <organismsDiffer>false</organismsDiffer>
    <experiments>3</experiments>
</comment>
<comment type="interaction">
    <interactant intactId="EBI-7225287">
        <id>Q96MY7</id>
    </interactant>
    <interactant intactId="EBI-1181367">
        <id>Q01850</id>
        <label>CDR2</label>
    </interactant>
    <organismsDiffer>false</organismsDiffer>
    <experiments>3</experiments>
</comment>
<comment type="interaction">
    <interactant intactId="EBI-7225287">
        <id>Q96MY7</id>
    </interactant>
    <interactant intactId="EBI-11063830">
        <id>Q86X02</id>
        <label>CDR2L</label>
    </interactant>
    <organismsDiffer>false</organismsDiffer>
    <experiments>3</experiments>
</comment>
<comment type="interaction">
    <interactant intactId="EBI-7225287">
        <id>Q96MY7</id>
    </interactant>
    <interactant intactId="EBI-747776">
        <id>Q53EZ4</id>
        <label>CEP55</label>
    </interactant>
    <organismsDiffer>false</organismsDiffer>
    <experiments>3</experiments>
</comment>
<comment type="interaction">
    <interactant intactId="EBI-7225287">
        <id>Q96MY7</id>
    </interactant>
    <interactant intactId="EBI-739624">
        <id>Q8NHQ1</id>
        <label>CEP70</label>
    </interactant>
    <organismsDiffer>false</organismsDiffer>
    <experiments>3</experiments>
</comment>
<comment type="interaction">
    <interactant intactId="EBI-7225287">
        <id>Q96MY7</id>
    </interactant>
    <interactant intactId="EBI-739784">
        <id>Q9BW66</id>
        <label>CINP</label>
    </interactant>
    <organismsDiffer>false</organismsDiffer>
    <experiments>3</experiments>
</comment>
<comment type="interaction">
    <interactant intactId="EBI-7225287">
        <id>Q96MY7</id>
    </interactant>
    <interactant intactId="EBI-11962928">
        <id>Q9UI47-2</id>
        <label>CTNNA3</label>
    </interactant>
    <organismsDiffer>false</organismsDiffer>
    <experiments>3</experiments>
</comment>
<comment type="interaction">
    <interactant intactId="EBI-7225287">
        <id>Q96MY7</id>
    </interactant>
    <interactant intactId="EBI-748248">
        <id>Q8WTU0</id>
        <label>DDI1</label>
    </interactant>
    <organismsDiffer>false</organismsDiffer>
    <experiments>3</experiments>
</comment>
<comment type="interaction">
    <interactant intactId="EBI-7225287">
        <id>Q96MY7</id>
    </interactant>
    <interactant intactId="EBI-371922">
        <id>Q96B26</id>
        <label>EXOSC8</label>
    </interactant>
    <organismsDiffer>false</organismsDiffer>
    <experiments>3</experiments>
</comment>
<comment type="interaction">
    <interactant intactId="EBI-7225287">
        <id>Q96MY7</id>
    </interactant>
    <interactant intactId="EBI-1052570">
        <id>O95995</id>
        <label>GAS8</label>
    </interactant>
    <organismsDiffer>false</organismsDiffer>
    <experiments>3</experiments>
</comment>
<comment type="interaction">
    <interactant intactId="EBI-7225287">
        <id>Q96MY7</id>
    </interactant>
    <interactant intactId="EBI-618309">
        <id>Q08379</id>
        <label>GOLGA2</label>
    </interactant>
    <organismsDiffer>false</organismsDiffer>
    <experiments>3</experiments>
</comment>
<comment type="interaction">
    <interactant intactId="EBI-7225287">
        <id>Q96MY7</id>
    </interactant>
    <interactant intactId="EBI-11163335">
        <id>Q9NYA3</id>
        <label>GOLGA6A</label>
    </interactant>
    <organismsDiffer>false</organismsDiffer>
    <experiments>3</experiments>
</comment>
<comment type="interaction">
    <interactant intactId="EBI-7225287">
        <id>Q96MY7</id>
    </interactant>
    <interactant intactId="EBI-5916454">
        <id>A6NEM1</id>
        <label>GOLGA6L9</label>
    </interactant>
    <organismsDiffer>false</organismsDiffer>
    <experiments>3</experiments>
</comment>
<comment type="interaction">
    <interactant intactId="EBI-7225287">
        <id>Q96MY7</id>
    </interactant>
    <interactant intactId="EBI-10261098">
        <id>Q86YR5-3</id>
        <label>GPSM1</label>
    </interactant>
    <organismsDiffer>false</organismsDiffer>
    <experiments>3</experiments>
</comment>
<comment type="interaction">
    <interactant intactId="EBI-7225287">
        <id>Q96MY7</id>
    </interactant>
    <interactant intactId="EBI-2514791">
        <id>Q96CS2</id>
        <label>HAUS1</label>
    </interactant>
    <organismsDiffer>false</organismsDiffer>
    <experiments>3</experiments>
</comment>
<comment type="interaction">
    <interactant intactId="EBI-7225287">
        <id>Q96MY7</id>
    </interactant>
    <interactant intactId="EBI-748420">
        <id>Q9NSC5</id>
        <label>HOMER3</label>
    </interactant>
    <organismsDiffer>false</organismsDiffer>
    <experiments>3</experiments>
</comment>
<comment type="interaction">
    <interactant intactId="EBI-7225287">
        <id>Q96MY7</id>
    </interactant>
    <interactant intactId="EBI-10961706">
        <id>Q96ED9-2</id>
        <label>HOOK2</label>
    </interactant>
    <organismsDiffer>false</organismsDiffer>
    <experiments>3</experiments>
</comment>
<comment type="interaction">
    <interactant intactId="EBI-7225287">
        <id>Q96MY7</id>
    </interactant>
    <interactant intactId="EBI-7116203">
        <id>O75031</id>
        <label>HSF2BP</label>
    </interactant>
    <organismsDiffer>false</organismsDiffer>
    <experiments>3</experiments>
</comment>
<comment type="interaction">
    <interactant intactId="EBI-7225287">
        <id>Q96MY7</id>
    </interactant>
    <interactant intactId="EBI-18398632">
        <id>Q9ULR0-1</id>
        <label>ISY1</label>
    </interactant>
    <organismsDiffer>false</organismsDiffer>
    <experiments>3</experiments>
</comment>
<comment type="interaction">
    <interactant intactId="EBI-7225287">
        <id>Q96MY7</id>
    </interactant>
    <interactant intactId="EBI-3437878">
        <id>Q86T90</id>
        <label>KIAA1328</label>
    </interactant>
    <organismsDiffer>false</organismsDiffer>
    <experiments>3</experiments>
</comment>
<comment type="interaction">
    <interactant intactId="EBI-7225287">
        <id>Q96MY7</id>
    </interactant>
    <interactant intactId="EBI-1216080">
        <id>Q9Y250</id>
        <label>LZTS1</label>
    </interactant>
    <organismsDiffer>false</organismsDiffer>
    <experiments>3</experiments>
</comment>
<comment type="interaction">
    <interactant intactId="EBI-7225287">
        <id>Q96MY7</id>
    </interactant>
    <interactant intactId="EBI-726739">
        <id>Q9UPY8</id>
        <label>MAPRE3</label>
    </interactant>
    <organismsDiffer>false</organismsDiffer>
    <experiments>3</experiments>
</comment>
<comment type="interaction">
    <interactant intactId="EBI-7225287">
        <id>Q96MY7</id>
    </interactant>
    <interactant intactId="EBI-724076">
        <id>Q99750</id>
        <label>MDFI</label>
    </interactant>
    <organismsDiffer>false</organismsDiffer>
    <experiments>3</experiments>
</comment>
<comment type="interaction">
    <interactant intactId="EBI-7225287">
        <id>Q96MY7</id>
    </interactant>
    <interactant intactId="EBI-18582591">
        <id>Q99687-3</id>
        <label>MEIS3</label>
    </interactant>
    <organismsDiffer>false</organismsDiffer>
    <experiments>3</experiments>
</comment>
<comment type="interaction">
    <interactant intactId="EBI-7225287">
        <id>Q96MY7</id>
    </interactant>
    <interactant intactId="EBI-10172526">
        <id>Q9UJV3-2</id>
        <label>MID2</label>
    </interactant>
    <organismsDiffer>false</organismsDiffer>
    <experiments>3</experiments>
</comment>
<comment type="interaction">
    <interactant intactId="EBI-7225287">
        <id>Q96MY7</id>
    </interactant>
    <interactant intactId="EBI-2548751">
        <id>Q8TD10</id>
        <label>MIPOL1</label>
    </interactant>
    <organismsDiffer>false</organismsDiffer>
    <experiments>3</experiments>
</comment>
<comment type="interaction">
    <interactant intactId="EBI-7225287">
        <id>Q96MY7</id>
    </interactant>
    <interactant intactId="EBI-11522433">
        <id>Q5JR59-3</id>
        <label>MTUS2</label>
    </interactant>
    <organismsDiffer>false</organismsDiffer>
    <experiments>3</experiments>
</comment>
<comment type="interaction">
    <interactant intactId="EBI-7225287">
        <id>Q96MY7</id>
    </interactant>
    <interactant intactId="EBI-1246238">
        <id>P17568</id>
        <label>NDUFB7</label>
    </interactant>
    <organismsDiffer>false</organismsDiffer>
    <experiments>3</experiments>
</comment>
<comment type="interaction">
    <interactant intactId="EBI-7225287">
        <id>Q96MY7</id>
    </interactant>
    <interactant intactId="EBI-10172876">
        <id>Q7Z6G3-2</id>
        <label>NECAB2</label>
    </interactant>
    <organismsDiffer>false</organismsDiffer>
    <experiments>3</experiments>
</comment>
<comment type="interaction">
    <interactant intactId="EBI-7225287">
        <id>Q96MY7</id>
    </interactant>
    <interactant intactId="EBI-536879">
        <id>O43482</id>
        <label>OIP5</label>
    </interactant>
    <organismsDiffer>false</organismsDiffer>
    <experiments>4</experiments>
</comment>
<comment type="interaction">
    <interactant intactId="EBI-7225287">
        <id>Q96MY7</id>
    </interactant>
    <interactant intactId="EBI-79165">
        <id>Q9NRD5</id>
        <label>PICK1</label>
    </interactant>
    <organismsDiffer>false</organismsDiffer>
    <experiments>3</experiments>
</comment>
<comment type="interaction">
    <interactant intactId="EBI-7225287">
        <id>Q96MY7</id>
    </interactant>
    <interactant intactId="EBI-2876622">
        <id>Q9UPG8</id>
        <label>PLAGL2</label>
    </interactant>
    <organismsDiffer>false</organismsDiffer>
    <experiments>3</experiments>
</comment>
<comment type="interaction">
    <interactant intactId="EBI-7225287">
        <id>Q96MY7</id>
    </interactant>
    <interactant intactId="EBI-302345">
        <id>Q8ND90</id>
        <label>PNMA1</label>
    </interactant>
    <organismsDiffer>false</organismsDiffer>
    <experiments>3</experiments>
</comment>
<comment type="interaction">
    <interactant intactId="EBI-7225287">
        <id>Q96MY7</id>
    </interactant>
    <interactant intactId="EBI-2561661">
        <id>Q969Q6</id>
        <label>PPP2R3C</label>
    </interactant>
    <organismsDiffer>false</organismsDiffer>
    <experiments>3</experiments>
</comment>
<comment type="interaction">
    <interactant intactId="EBI-7225287">
        <id>Q96MY7</id>
    </interactant>
    <interactant intactId="EBI-726876">
        <id>Q6NUQ1</id>
        <label>RINT1</label>
    </interactant>
    <organismsDiffer>false</organismsDiffer>
    <experiments>3</experiments>
</comment>
<comment type="interaction">
    <interactant intactId="EBI-7225287">
        <id>Q96MY7</id>
    </interactant>
    <interactant intactId="EBI-747389">
        <id>Q7L8J4</id>
        <label>SH3BP5L</label>
    </interactant>
    <organismsDiffer>false</organismsDiffer>
    <experiments>3</experiments>
</comment>
<comment type="interaction">
    <interactant intactId="EBI-7225287">
        <id>Q96MY7</id>
    </interactant>
    <interactant intactId="EBI-12811275">
        <id>O95238</id>
        <label>SPDEF</label>
    </interactant>
    <organismsDiffer>false</organismsDiffer>
    <experiments>3</experiments>
</comment>
<comment type="interaction">
    <interactant intactId="EBI-7225287">
        <id>Q96MY7</id>
    </interactant>
    <interactant intactId="EBI-17766455">
        <id>A0A286YEY3</id>
        <label>SRGAP2B</label>
    </interactant>
    <organismsDiffer>false</organismsDiffer>
    <experiments>3</experiments>
</comment>
<comment type="interaction">
    <interactant intactId="EBI-7225287">
        <id>Q96MY7</id>
    </interactant>
    <interactant intactId="EBI-714135">
        <id>O75558</id>
        <label>STX11</label>
    </interactant>
    <organismsDiffer>false</organismsDiffer>
    <experiments>3</experiments>
</comment>
<comment type="interaction">
    <interactant intactId="EBI-7225287">
        <id>Q96MY7</id>
    </interactant>
    <interactant intactId="EBI-9071709">
        <id>P61266</id>
        <label>STX1B</label>
    </interactant>
    <organismsDiffer>false</organismsDiffer>
    <experiments>3</experiments>
</comment>
<comment type="interaction">
    <interactant intactId="EBI-7225287">
        <id>Q96MY7</id>
    </interactant>
    <interactant intactId="EBI-6872807">
        <id>Q8N0S2</id>
        <label>SYCE1</label>
    </interactant>
    <organismsDiffer>false</organismsDiffer>
    <experiments>4</experiments>
</comment>
<comment type="interaction">
    <interactant intactId="EBI-7225287">
        <id>Q96MY7</id>
    </interactant>
    <interactant intactId="EBI-11523345">
        <id>Q8IYF3-3</id>
        <label>TEX11</label>
    </interactant>
    <organismsDiffer>false</organismsDiffer>
    <experiments>3</experiments>
</comment>
<comment type="interaction">
    <interactant intactId="EBI-7225287">
        <id>Q96MY7</id>
    </interactant>
    <interactant intactId="EBI-12090309">
        <id>Q9BXU0</id>
        <label>TEX12</label>
    </interactant>
    <organismsDiffer>false</organismsDiffer>
    <experiments>3</experiments>
</comment>
<comment type="interaction">
    <interactant intactId="EBI-7225287">
        <id>Q96MY7</id>
    </interactant>
    <interactant intactId="EBI-1105213">
        <id>Q9UBB9</id>
        <label>TFIP11</label>
    </interactant>
    <organismsDiffer>false</organismsDiffer>
    <experiments>3</experiments>
</comment>
<comment type="interaction">
    <interactant intactId="EBI-7225287">
        <id>Q96MY7</id>
    </interactant>
    <interactant intactId="EBI-359224">
        <id>Q13077</id>
        <label>TRAF1</label>
    </interactant>
    <organismsDiffer>false</organismsDiffer>
    <experiments>3</experiments>
</comment>
<comment type="interaction">
    <interactant intactId="EBI-7225287">
        <id>Q96MY7</id>
    </interactant>
    <interactant intactId="EBI-355744">
        <id>Q12933</id>
        <label>TRAF2</label>
    </interactant>
    <organismsDiffer>false</organismsDiffer>
    <experiments>3</experiments>
</comment>
<comment type="interaction">
    <interactant intactId="EBI-7225287">
        <id>Q96MY7</id>
    </interactant>
    <interactant intactId="EBI-2342111">
        <id>Q9C019</id>
        <label>TRIM15</label>
    </interactant>
    <organismsDiffer>false</organismsDiffer>
    <experiments>3</experiments>
</comment>
<comment type="interaction">
    <interactant intactId="EBI-7225287">
        <id>Q96MY7</id>
    </interactant>
    <interactant intactId="EBI-744794">
        <id>Q9BZW7</id>
        <label>TSGA10</label>
    </interactant>
    <organismsDiffer>false</organismsDiffer>
    <experiments>3</experiments>
</comment>
<comment type="interaction">
    <interactant intactId="EBI-7225287">
        <id>Q96MY7</id>
    </interactant>
    <interactant intactId="EBI-6872498">
        <id>Q2TAA8</id>
        <label>TSNAXIP1</label>
    </interactant>
    <organismsDiffer>false</organismsDiffer>
    <experiments>3</experiments>
</comment>
<comment type="interaction">
    <interactant intactId="EBI-7225287">
        <id>Q96MY7</id>
    </interactant>
    <interactant intactId="EBI-9090990">
        <id>Q5W5X9-3</id>
        <label>TTC23</label>
    </interactant>
    <organismsDiffer>false</organismsDiffer>
    <experiments>3</experiments>
</comment>
<comment type="interaction">
    <interactant intactId="EBI-7225287">
        <id>Q96MY7</id>
    </interactant>
    <interactant intactId="EBI-8656864">
        <id>Q6PF05</id>
        <label>TTC23L</label>
    </interactant>
    <organismsDiffer>false</organismsDiffer>
    <experiments>3</experiments>
</comment>
<comment type="interaction">
    <interactant intactId="EBI-7225287">
        <id>Q96MY7</id>
    </interactant>
    <interactant intactId="EBI-8601749">
        <id>Q495M9</id>
        <label>USH1G</label>
    </interactant>
    <organismsDiffer>false</organismsDiffer>
    <experiments>4</experiments>
</comment>
<comment type="interaction">
    <interactant intactId="EBI-7225287">
        <id>Q96MY7</id>
    </interactant>
    <interactant intactId="EBI-739895">
        <id>Q8N6Y0</id>
        <label>USHBP1</label>
    </interactant>
    <organismsDiffer>false</organismsDiffer>
    <experiments>3</experiments>
</comment>
<comment type="interaction">
    <interactant intactId="EBI-7225287">
        <id>Q96MY7</id>
    </interactant>
    <interactant intactId="EBI-2799833">
        <id>Q8N1B4</id>
        <label>VPS52</label>
    </interactant>
    <organismsDiffer>false</organismsDiffer>
    <experiments>3</experiments>
</comment>
<comment type="interaction">
    <interactant intactId="EBI-7225287">
        <id>Q96MY7</id>
    </interactant>
    <interactant intactId="EBI-747993">
        <id>Q9NQZ6</id>
        <label>ZC4H2</label>
    </interactant>
    <organismsDiffer>false</organismsDiffer>
    <experiments>3</experiments>
</comment>
<comment type="interaction">
    <interactant intactId="EBI-7225287">
        <id>Q96MY7</id>
    </interactant>
    <interactant intactId="EBI-1640204">
        <id>Q9UDV6</id>
        <label>ZNF212</label>
    </interactant>
    <organismsDiffer>false</organismsDiffer>
    <experiments>3</experiments>
</comment>
<comment type="interaction">
    <interactant intactId="EBI-7225287">
        <id>Q96MY7</id>
    </interactant>
    <interactant intactId="EBI-527853">
        <id>Q9UGI0</id>
        <label>ZRANB1</label>
    </interactant>
    <organismsDiffer>false</organismsDiffer>
    <experiments>3</experiments>
</comment>
<comment type="alternative products">
    <event type="alternative splicing"/>
    <isoform>
        <id>Q96MY7-1</id>
        <name>1</name>
        <sequence type="displayed"/>
    </isoform>
    <isoform>
        <id>Q96MY7-2</id>
        <name>2</name>
        <sequence type="described" ref="VSP_046328"/>
    </isoform>
</comment>
<comment type="tissue specificity">
    <text evidence="4">Ubiquitously expressed.</text>
</comment>
<comment type="similarity">
    <text evidence="6">Belongs to the FAM161 family.</text>
</comment>
<name>F161B_HUMAN</name>
<accession>Q96MY7</accession>
<accession>B7Z882</accession>
<accession>J3KNA2</accession>
<gene>
    <name type="primary">FAM161B</name>
    <name type="synonym">C14orf44</name>
</gene>